<organism>
    <name type="scientific">Acidithiobacillus ferrooxidans (strain ATCC 53993 / BNL-5-31)</name>
    <name type="common">Leptospirillum ferrooxidans (ATCC 53993)</name>
    <dbReference type="NCBI Taxonomy" id="380394"/>
    <lineage>
        <taxon>Bacteria</taxon>
        <taxon>Pseudomonadati</taxon>
        <taxon>Pseudomonadota</taxon>
        <taxon>Acidithiobacillia</taxon>
        <taxon>Acidithiobacillales</taxon>
        <taxon>Acidithiobacillaceae</taxon>
        <taxon>Acidithiobacillus</taxon>
    </lineage>
</organism>
<comment type="function">
    <text evidence="1">This protein binds to 23S rRNA in the presence of protein L20.</text>
</comment>
<comment type="subunit">
    <text evidence="1">Part of the 50S ribosomal subunit. Contacts protein L20.</text>
</comment>
<comment type="similarity">
    <text evidence="1">Belongs to the bacterial ribosomal protein bL21 family.</text>
</comment>
<name>RL21_ACIF5</name>
<feature type="chain" id="PRO_1000143746" description="Large ribosomal subunit protein bL21">
    <location>
        <begin position="1"/>
        <end position="103"/>
    </location>
</feature>
<sequence length="103" mass="11724">MYAVIENGGKQYRVTVGDKLRLERMEMEPGAELALDRVLMVGVGDDVQVGRPLVEGAAVKATVLSQGRAKKVHIFKMRRRKHYRKQQGHRQYFTEVRITGIEA</sequence>
<proteinExistence type="inferred from homology"/>
<protein>
    <recommendedName>
        <fullName evidence="1">Large ribosomal subunit protein bL21</fullName>
    </recommendedName>
    <alternativeName>
        <fullName evidence="2">50S ribosomal protein L21</fullName>
    </alternativeName>
</protein>
<reference key="1">
    <citation type="submission" date="2008-08" db="EMBL/GenBank/DDBJ databases">
        <title>Complete sequence of Acidithiobacillus ferrooxidans ATCC 53993.</title>
        <authorList>
            <person name="Lucas S."/>
            <person name="Copeland A."/>
            <person name="Lapidus A."/>
            <person name="Glavina del Rio T."/>
            <person name="Dalin E."/>
            <person name="Tice H."/>
            <person name="Bruce D."/>
            <person name="Goodwin L."/>
            <person name="Pitluck S."/>
            <person name="Sims D."/>
            <person name="Brettin T."/>
            <person name="Detter J.C."/>
            <person name="Han C."/>
            <person name="Kuske C.R."/>
            <person name="Larimer F."/>
            <person name="Land M."/>
            <person name="Hauser L."/>
            <person name="Kyrpides N."/>
            <person name="Lykidis A."/>
            <person name="Borole A.P."/>
        </authorList>
    </citation>
    <scope>NUCLEOTIDE SEQUENCE [LARGE SCALE GENOMIC DNA]</scope>
    <source>
        <strain>ATCC 53993 / BNL-5-31</strain>
    </source>
</reference>
<evidence type="ECO:0000255" key="1">
    <source>
        <dbReference type="HAMAP-Rule" id="MF_01363"/>
    </source>
</evidence>
<evidence type="ECO:0000305" key="2"/>
<accession>B5ELU4</accession>
<dbReference type="EMBL" id="CP001132">
    <property type="protein sequence ID" value="ACH82716.1"/>
    <property type="molecule type" value="Genomic_DNA"/>
</dbReference>
<dbReference type="RefSeq" id="WP_009565805.1">
    <property type="nucleotide sequence ID" value="NC_011206.1"/>
</dbReference>
<dbReference type="SMR" id="B5ELU4"/>
<dbReference type="GeneID" id="65279667"/>
<dbReference type="KEGG" id="afe:Lferr_0462"/>
<dbReference type="eggNOG" id="COG0261">
    <property type="taxonomic scope" value="Bacteria"/>
</dbReference>
<dbReference type="HOGENOM" id="CLU_061463_3_2_6"/>
<dbReference type="GO" id="GO:0005737">
    <property type="term" value="C:cytoplasm"/>
    <property type="evidence" value="ECO:0007669"/>
    <property type="project" value="UniProtKB-ARBA"/>
</dbReference>
<dbReference type="GO" id="GO:1990904">
    <property type="term" value="C:ribonucleoprotein complex"/>
    <property type="evidence" value="ECO:0007669"/>
    <property type="project" value="UniProtKB-KW"/>
</dbReference>
<dbReference type="GO" id="GO:0005840">
    <property type="term" value="C:ribosome"/>
    <property type="evidence" value="ECO:0007669"/>
    <property type="project" value="UniProtKB-KW"/>
</dbReference>
<dbReference type="GO" id="GO:0019843">
    <property type="term" value="F:rRNA binding"/>
    <property type="evidence" value="ECO:0007669"/>
    <property type="project" value="UniProtKB-UniRule"/>
</dbReference>
<dbReference type="GO" id="GO:0003735">
    <property type="term" value="F:structural constituent of ribosome"/>
    <property type="evidence" value="ECO:0007669"/>
    <property type="project" value="InterPro"/>
</dbReference>
<dbReference type="GO" id="GO:0006412">
    <property type="term" value="P:translation"/>
    <property type="evidence" value="ECO:0007669"/>
    <property type="project" value="UniProtKB-UniRule"/>
</dbReference>
<dbReference type="HAMAP" id="MF_01363">
    <property type="entry name" value="Ribosomal_bL21"/>
    <property type="match status" value="1"/>
</dbReference>
<dbReference type="InterPro" id="IPR028909">
    <property type="entry name" value="bL21-like"/>
</dbReference>
<dbReference type="InterPro" id="IPR036164">
    <property type="entry name" value="bL21-like_sf"/>
</dbReference>
<dbReference type="InterPro" id="IPR001787">
    <property type="entry name" value="Ribosomal_bL21"/>
</dbReference>
<dbReference type="InterPro" id="IPR018258">
    <property type="entry name" value="Ribosomal_bL21_CS"/>
</dbReference>
<dbReference type="NCBIfam" id="TIGR00061">
    <property type="entry name" value="L21"/>
    <property type="match status" value="1"/>
</dbReference>
<dbReference type="PANTHER" id="PTHR21349">
    <property type="entry name" value="50S RIBOSOMAL PROTEIN L21"/>
    <property type="match status" value="1"/>
</dbReference>
<dbReference type="PANTHER" id="PTHR21349:SF0">
    <property type="entry name" value="LARGE RIBOSOMAL SUBUNIT PROTEIN BL21M"/>
    <property type="match status" value="1"/>
</dbReference>
<dbReference type="Pfam" id="PF00829">
    <property type="entry name" value="Ribosomal_L21p"/>
    <property type="match status" value="1"/>
</dbReference>
<dbReference type="SUPFAM" id="SSF141091">
    <property type="entry name" value="L21p-like"/>
    <property type="match status" value="1"/>
</dbReference>
<dbReference type="PROSITE" id="PS01169">
    <property type="entry name" value="RIBOSOMAL_L21"/>
    <property type="match status" value="1"/>
</dbReference>
<keyword id="KW-0687">Ribonucleoprotein</keyword>
<keyword id="KW-0689">Ribosomal protein</keyword>
<keyword id="KW-0694">RNA-binding</keyword>
<keyword id="KW-0699">rRNA-binding</keyword>
<gene>
    <name evidence="1" type="primary">rplU</name>
    <name type="ordered locus">Lferr_0462</name>
</gene>